<accession>P13744</accession>
<dbReference type="EMBL" id="M36407">
    <property type="protein sequence ID" value="AAA33110.1"/>
    <property type="molecule type" value="mRNA"/>
</dbReference>
<dbReference type="PDB" id="2E9Q">
    <property type="method" value="X-ray"/>
    <property type="resolution" value="2.20 A"/>
    <property type="chains" value="A=22-480"/>
</dbReference>
<dbReference type="PDB" id="2EVX">
    <property type="method" value="X-ray"/>
    <property type="resolution" value="2.60 A"/>
    <property type="chains" value="A=22-480"/>
</dbReference>
<dbReference type="PDBsum" id="2E9Q"/>
<dbReference type="PDBsum" id="2EVX"/>
<dbReference type="SMR" id="P13744"/>
<dbReference type="Allergome" id="12222">
    <property type="allergen name" value="Cuc ma 4"/>
</dbReference>
<dbReference type="Allergome" id="12223">
    <property type="allergen name" value="Cuc ma 4.0101"/>
</dbReference>
<dbReference type="EvolutionaryTrace" id="P13744"/>
<dbReference type="Proteomes" id="UP000504608">
    <property type="component" value="Unplaced"/>
</dbReference>
<dbReference type="GO" id="GO:0046872">
    <property type="term" value="F:metal ion binding"/>
    <property type="evidence" value="ECO:0007669"/>
    <property type="project" value="UniProtKB-KW"/>
</dbReference>
<dbReference type="GO" id="GO:0045735">
    <property type="term" value="F:nutrient reservoir activity"/>
    <property type="evidence" value="ECO:0007669"/>
    <property type="project" value="UniProtKB-KW"/>
</dbReference>
<dbReference type="CDD" id="cd02243">
    <property type="entry name" value="cupin_11S_legumin_C"/>
    <property type="match status" value="1"/>
</dbReference>
<dbReference type="CDD" id="cd02242">
    <property type="entry name" value="cupin_11S_legumin_N"/>
    <property type="match status" value="1"/>
</dbReference>
<dbReference type="FunFam" id="2.60.120.10:FF:000073">
    <property type="entry name" value="Glycinin G1"/>
    <property type="match status" value="1"/>
</dbReference>
<dbReference type="Gene3D" id="2.60.120.10">
    <property type="entry name" value="Jelly Rolls"/>
    <property type="match status" value="2"/>
</dbReference>
<dbReference type="InterPro" id="IPR022379">
    <property type="entry name" value="11S_seedstore_CS"/>
</dbReference>
<dbReference type="InterPro" id="IPR006044">
    <property type="entry name" value="11S_seedstore_pln"/>
</dbReference>
<dbReference type="InterPro" id="IPR006045">
    <property type="entry name" value="Cupin_1"/>
</dbReference>
<dbReference type="InterPro" id="IPR014710">
    <property type="entry name" value="RmlC-like_jellyroll"/>
</dbReference>
<dbReference type="InterPro" id="IPR011051">
    <property type="entry name" value="RmlC_Cupin_sf"/>
</dbReference>
<dbReference type="InterPro" id="IPR050253">
    <property type="entry name" value="Seed_Storage-Functional"/>
</dbReference>
<dbReference type="PANTHER" id="PTHR31189:SF48">
    <property type="entry name" value="LEGUMIN B"/>
    <property type="match status" value="1"/>
</dbReference>
<dbReference type="PANTHER" id="PTHR31189">
    <property type="entry name" value="OS03G0336100 PROTEIN-RELATED"/>
    <property type="match status" value="1"/>
</dbReference>
<dbReference type="Pfam" id="PF00190">
    <property type="entry name" value="Cupin_1"/>
    <property type="match status" value="2"/>
</dbReference>
<dbReference type="PRINTS" id="PR00439">
    <property type="entry name" value="11SGLOBULIN"/>
</dbReference>
<dbReference type="SMART" id="SM00835">
    <property type="entry name" value="Cupin_1"/>
    <property type="match status" value="2"/>
</dbReference>
<dbReference type="SUPFAM" id="SSF51182">
    <property type="entry name" value="RmlC-like cupins"/>
    <property type="match status" value="1"/>
</dbReference>
<dbReference type="PROSITE" id="PS00305">
    <property type="entry name" value="11S_SEED_STORAGE"/>
    <property type="match status" value="1"/>
</dbReference>
<proteinExistence type="evidence at protein level"/>
<comment type="function">
    <text>This is a seed storage protein.</text>
</comment>
<comment type="subunit">
    <text>Hexamer; each subunit is composed of an acidic and a basic chain derived from a single precursor and linked by a disulfide bond.</text>
</comment>
<comment type="similarity">
    <text evidence="4">Belongs to the 11S seed storage protein (globulins) family.</text>
</comment>
<keyword id="KW-0002">3D-structure</keyword>
<keyword id="KW-0903">Direct protein sequencing</keyword>
<keyword id="KW-1015">Disulfide bond</keyword>
<keyword id="KW-0460">Magnesium</keyword>
<keyword id="KW-0479">Metal-binding</keyword>
<keyword id="KW-0873">Pyrrolidone carboxylic acid</keyword>
<keyword id="KW-1185">Reference proteome</keyword>
<keyword id="KW-0708">Seed storage protein</keyword>
<keyword id="KW-0732">Signal</keyword>
<keyword id="KW-0758">Storage protein</keyword>
<reference key="1">
    <citation type="journal article" date="1988" name="Eur. J. Biochem.">
        <title>Nucleotide sequence of cloned cDNA coding for pumpkin 11-S globulin beta subunit.</title>
        <authorList>
            <person name="Hayashi M."/>
            <person name="Mori H."/>
            <person name="Nishimura M."/>
            <person name="Akazawa T."/>
            <person name="Hara-Nishimura I."/>
        </authorList>
    </citation>
    <scope>NUCLEOTIDE SEQUENCE [MRNA]</scope>
    <source>
        <strain>cv. Kurokawa Amakuri Nankin</strain>
    </source>
</reference>
<reference key="2">
    <citation type="journal article" date="1980" name="Plant Cell Physiol.">
        <title>Pumpkin (Cucurbita sp.) seed globulin IV. Terminal sequences of the acidic and basic peptide chains and identification of a pyroglutamyl peptide chain.</title>
        <authorList>
            <person name="Ohmiya M."/>
            <person name="Hara I."/>
            <person name="Mastubara H."/>
        </authorList>
    </citation>
    <scope>PROTEIN SEQUENCE OF 22-30 AND 297-302</scope>
    <scope>PYROGLUTAMATE FORMATION AT GLN-22</scope>
</reference>
<reference key="3">
    <citation type="submission" date="2005-11" db="PDB data bank">
        <title>Crystal structure of pumpkin seed globulin.</title>
        <authorList>
            <person name="Itoh T."/>
            <person name="Fukuda T."/>
            <person name="Mikami B."/>
            <person name="Utsumi S."/>
        </authorList>
    </citation>
    <scope>X-RAY CRYSTALLOGRAPHY (2.6 ANGSTROMS) OF 22-480</scope>
    <scope>DISULFIDE BONDS</scope>
</reference>
<feature type="signal peptide" evidence="2">
    <location>
        <begin position="1"/>
        <end position="21"/>
    </location>
</feature>
<feature type="chain" id="PRO_0000032027" description="11S globulin subunit beta">
    <location>
        <begin position="22"/>
        <end position="480"/>
    </location>
</feature>
<feature type="chain" id="PRO_0000032028" description="11S globulin gamma chain">
    <location>
        <begin position="22"/>
        <end position="296"/>
    </location>
</feature>
<feature type="chain" id="PRO_0000032029" description="11S globulin delta chain">
    <location>
        <begin position="297"/>
        <end position="480"/>
    </location>
</feature>
<feature type="domain" description="Cupin type-1 1" evidence="1">
    <location>
        <begin position="51"/>
        <end position="251"/>
    </location>
</feature>
<feature type="domain" description="Cupin type-1 2" evidence="1">
    <location>
        <begin position="309"/>
        <end position="458"/>
    </location>
</feature>
<feature type="binding site">
    <location>
        <position position="408"/>
    </location>
    <ligand>
        <name>Mg(2+)</name>
        <dbReference type="ChEBI" id="CHEBI:18420"/>
    </ligand>
</feature>
<feature type="binding site">
    <location>
        <position position="468"/>
    </location>
    <ligand>
        <name>Mg(2+)</name>
        <dbReference type="ChEBI" id="CHEBI:18420"/>
    </ligand>
</feature>
<feature type="modified residue" description="Pyrrolidone carboxylic acid" evidence="2">
    <location>
        <position position="22"/>
    </location>
</feature>
<feature type="disulfide bond" evidence="3">
    <location>
        <begin position="48"/>
        <end position="81"/>
    </location>
</feature>
<feature type="disulfide bond" description="Interchain (between gamma and delta chains)" evidence="3">
    <location>
        <begin position="124"/>
        <end position="303"/>
    </location>
</feature>
<feature type="sequence conflict" description="In Ref. 2; AA sequence." evidence="4" ref="2">
    <original>S</original>
    <variation>E</variation>
    <location>
        <position position="27"/>
    </location>
</feature>
<feature type="sequence conflict" description="In Ref. 2; AA sequence." evidence="4" ref="2">
    <original>E</original>
    <variation>S</variation>
    <location>
        <position position="30"/>
    </location>
</feature>
<feature type="strand" evidence="5">
    <location>
        <begin position="60"/>
        <end position="64"/>
    </location>
</feature>
<feature type="strand" evidence="5">
    <location>
        <begin position="67"/>
        <end position="71"/>
    </location>
</feature>
<feature type="helix" evidence="5">
    <location>
        <begin position="77"/>
        <end position="82"/>
    </location>
</feature>
<feature type="strand" evidence="5">
    <location>
        <begin position="84"/>
        <end position="91"/>
    </location>
</feature>
<feature type="strand" evidence="5">
    <location>
        <begin position="95"/>
        <end position="104"/>
    </location>
</feature>
<feature type="strand" evidence="5">
    <location>
        <begin position="106"/>
        <end position="112"/>
    </location>
</feature>
<feature type="strand" evidence="5">
    <location>
        <begin position="114"/>
        <end position="119"/>
    </location>
</feature>
<feature type="strand" evidence="5">
    <location>
        <begin position="128"/>
        <end position="130"/>
    </location>
</feature>
<feature type="strand" evidence="5">
    <location>
        <begin position="144"/>
        <end position="146"/>
    </location>
</feature>
<feature type="strand" evidence="5">
    <location>
        <begin position="150"/>
        <end position="153"/>
    </location>
</feature>
<feature type="strand" evidence="5">
    <location>
        <begin position="156"/>
        <end position="160"/>
    </location>
</feature>
<feature type="strand" evidence="5">
    <location>
        <begin position="166"/>
        <end position="170"/>
    </location>
</feature>
<feature type="strand" evidence="5">
    <location>
        <begin position="172"/>
        <end position="174"/>
    </location>
</feature>
<feature type="strand" evidence="5">
    <location>
        <begin position="176"/>
        <end position="186"/>
    </location>
</feature>
<feature type="strand" evidence="5">
    <location>
        <begin position="197"/>
        <end position="202"/>
    </location>
</feature>
<feature type="turn" evidence="5">
    <location>
        <begin position="230"/>
        <end position="233"/>
    </location>
</feature>
<feature type="helix" evidence="5">
    <location>
        <begin position="236"/>
        <end position="243"/>
    </location>
</feature>
<feature type="helix" evidence="5">
    <location>
        <begin position="247"/>
        <end position="254"/>
    </location>
</feature>
<feature type="turn" evidence="5">
    <location>
        <begin position="255"/>
        <end position="257"/>
    </location>
</feature>
<feature type="strand" evidence="5">
    <location>
        <begin position="263"/>
        <end position="265"/>
    </location>
</feature>
<feature type="turn" evidence="5">
    <location>
        <begin position="272"/>
        <end position="275"/>
    </location>
</feature>
<feature type="helix" evidence="5">
    <location>
        <begin position="302"/>
        <end position="304"/>
    </location>
</feature>
<feature type="strand" evidence="5">
    <location>
        <begin position="308"/>
        <end position="310"/>
    </location>
</feature>
<feature type="strand" evidence="5">
    <location>
        <begin position="318"/>
        <end position="321"/>
    </location>
</feature>
<feature type="turn" evidence="5">
    <location>
        <begin position="322"/>
        <end position="324"/>
    </location>
</feature>
<feature type="strand" evidence="5">
    <location>
        <begin position="325"/>
        <end position="330"/>
    </location>
</feature>
<feature type="turn" evidence="5">
    <location>
        <begin position="332"/>
        <end position="334"/>
    </location>
</feature>
<feature type="helix" evidence="5">
    <location>
        <begin position="338"/>
        <end position="341"/>
    </location>
</feature>
<feature type="strand" evidence="5">
    <location>
        <begin position="344"/>
        <end position="350"/>
    </location>
</feature>
<feature type="strand" evidence="5">
    <location>
        <begin position="355"/>
        <end position="363"/>
    </location>
</feature>
<feature type="strand" evidence="5">
    <location>
        <begin position="366"/>
        <end position="380"/>
    </location>
</feature>
<feature type="strand" evidence="5">
    <location>
        <begin position="386"/>
        <end position="393"/>
    </location>
</feature>
<feature type="strand" evidence="5">
    <location>
        <begin position="397"/>
        <end position="400"/>
    </location>
</feature>
<feature type="strand" evidence="5">
    <location>
        <begin position="405"/>
        <end position="425"/>
    </location>
</feature>
<feature type="strand" evidence="5">
    <location>
        <begin position="428"/>
        <end position="436"/>
    </location>
</feature>
<feature type="helix" evidence="5">
    <location>
        <begin position="437"/>
        <end position="440"/>
    </location>
</feature>
<feature type="helix" evidence="5">
    <location>
        <begin position="443"/>
        <end position="450"/>
    </location>
</feature>
<feature type="helix" evidence="5">
    <location>
        <begin position="454"/>
        <end position="462"/>
    </location>
</feature>
<feature type="strand" evidence="5">
    <location>
        <begin position="468"/>
        <end position="470"/>
    </location>
</feature>
<organism>
    <name type="scientific">Cucurbita maxima</name>
    <name type="common">Pumpkin</name>
    <name type="synonym">Winter squash</name>
    <dbReference type="NCBI Taxonomy" id="3661"/>
    <lineage>
        <taxon>Eukaryota</taxon>
        <taxon>Viridiplantae</taxon>
        <taxon>Streptophyta</taxon>
        <taxon>Embryophyta</taxon>
        <taxon>Tracheophyta</taxon>
        <taxon>Spermatophyta</taxon>
        <taxon>Magnoliopsida</taxon>
        <taxon>eudicotyledons</taxon>
        <taxon>Gunneridae</taxon>
        <taxon>Pentapetalae</taxon>
        <taxon>rosids</taxon>
        <taxon>fabids</taxon>
        <taxon>Cucurbitales</taxon>
        <taxon>Cucurbitaceae</taxon>
        <taxon>Cucurbiteae</taxon>
        <taxon>Cucurbita</taxon>
    </lineage>
</organism>
<sequence>MARSSLFTFLCLAVFINGCLSQIEQQSPWEFQGSEVWQQHRYQSPRACRLENLRAQDPVRRAEAEAIFTEVWDQDNDEFQCAGVNMIRHTIRPKGLLLPGFSNAPKLIFVAQGFGIRGIAIPGCAETYQTDLRRSQSAGSAFKDQHQKIRPFREGDLLVVPAGVSHWMYNRGQSDLVLIVFADTRNVANQIDPYLRKFYLAGRPEQVERGVEEWERSSRKGSSGEKSGNIFSGFADEFLEEAFQIDGGLVRKLKGEDDERDRIVQVDEDFEVLLPEKDEEERSRGRYIESESESENGLEETICTLRLKQNIGRSVRADVFNPRGGRISTANYHTLPILRQVRLSAERGVLYSNAMVAPHYTVNSHSVMYATRGNARVQVVDNFGQSVFDGEVREGQVLMIPQNFVVIKRASDRGFEWIAFKTNDNAITNLLAGRVSQMRMLPLGVLSNMYRISREEAQRLKYGQQEMRVLSPGRSQGRRE</sequence>
<name>11SB_CUCMA</name>
<evidence type="ECO:0000255" key="1"/>
<evidence type="ECO:0000269" key="2">
    <source ref="2"/>
</evidence>
<evidence type="ECO:0000269" key="3">
    <source ref="3"/>
</evidence>
<evidence type="ECO:0000305" key="4"/>
<evidence type="ECO:0007829" key="5">
    <source>
        <dbReference type="PDB" id="2E9Q"/>
    </source>
</evidence>
<protein>
    <recommendedName>
        <fullName>11S globulin subunit beta</fullName>
    </recommendedName>
    <component>
        <recommendedName>
            <fullName>11S globulin gamma chain</fullName>
        </recommendedName>
        <alternativeName>
            <fullName>11S globulin acidic chain</fullName>
        </alternativeName>
    </component>
    <component>
        <recommendedName>
            <fullName>11S globulin delta chain</fullName>
        </recommendedName>
        <alternativeName>
            <fullName>11S globulin basic chain</fullName>
        </alternativeName>
    </component>
</protein>